<organism>
    <name type="scientific">Danio rerio</name>
    <name type="common">Zebrafish</name>
    <name type="synonym">Brachydanio rerio</name>
    <dbReference type="NCBI Taxonomy" id="7955"/>
    <lineage>
        <taxon>Eukaryota</taxon>
        <taxon>Metazoa</taxon>
        <taxon>Chordata</taxon>
        <taxon>Craniata</taxon>
        <taxon>Vertebrata</taxon>
        <taxon>Euteleostomi</taxon>
        <taxon>Actinopterygii</taxon>
        <taxon>Neopterygii</taxon>
        <taxon>Teleostei</taxon>
        <taxon>Ostariophysi</taxon>
        <taxon>Cypriniformes</taxon>
        <taxon>Danionidae</taxon>
        <taxon>Danioninae</taxon>
        <taxon>Danio</taxon>
    </lineage>
</organism>
<evidence type="ECO:0000250" key="1"/>
<evidence type="ECO:0000255" key="2"/>
<evidence type="ECO:0000255" key="3">
    <source>
        <dbReference type="PROSITE-ProRule" id="PRU00114"/>
    </source>
</evidence>
<evidence type="ECO:0000305" key="4"/>
<gene>
    <name type="primary">metrnl</name>
    <name type="ORF">zgc:56225</name>
</gene>
<reference key="1">
    <citation type="submission" date="2003-01" db="EMBL/GenBank/DDBJ databases">
        <authorList>
            <consortium name="NIH - Zebrafish Gene Collection (ZGC) project"/>
        </authorList>
    </citation>
    <scope>NUCLEOTIDE SEQUENCE [LARGE SCALE MRNA]</scope>
</reference>
<protein>
    <recommendedName>
        <fullName>Meteorin-like protein</fullName>
    </recommendedName>
</protein>
<keyword id="KW-1015">Disulfide bond</keyword>
<keyword id="KW-0372">Hormone</keyword>
<keyword id="KW-1185">Reference proteome</keyword>
<keyword id="KW-0964">Secreted</keyword>
<keyword id="KW-0732">Signal</keyword>
<comment type="function">
    <text evidence="1">Hormone induced following exercise or cold exposure that promotes energy expenditure. Induced either in the skeletal muscle after exercise or in adipose tissue following cold exposure and is present in the circulation. Able to stimulate energy expenditure associated with the browning of the white fat depots and improves glucose tolerance (By similarity).</text>
</comment>
<comment type="subcellular location">
    <subcellularLocation>
        <location evidence="1">Secreted</location>
    </subcellularLocation>
</comment>
<comment type="similarity">
    <text evidence="4">Belongs to the meteorin family.</text>
</comment>
<accession>Q7ZV46</accession>
<feature type="signal peptide" evidence="2">
    <location>
        <begin position="1"/>
        <end position="21"/>
    </location>
</feature>
<feature type="chain" id="PRO_0000289107" description="Meteorin-like protein">
    <location>
        <begin position="22"/>
        <end position="286"/>
    </location>
</feature>
<feature type="disulfide bond" evidence="3">
    <location>
        <begin position="28"/>
        <end position="51"/>
    </location>
</feature>
<feature type="disulfide bond" evidence="3">
    <location>
        <begin position="84"/>
        <end position="120"/>
    </location>
</feature>
<feature type="disulfide bond" evidence="3">
    <location>
        <begin position="165"/>
        <end position="235"/>
    </location>
</feature>
<feature type="disulfide bond" evidence="3">
    <location>
        <begin position="168"/>
        <end position="259"/>
    </location>
</feature>
<feature type="disulfide bond" evidence="3">
    <location>
        <begin position="178"/>
        <end position="281"/>
    </location>
</feature>
<proteinExistence type="evidence at transcript level"/>
<sequence length="286" mass="31709">MLSPFLAYLLSVVLLCRIARSQYSSDQCSWRGSGLTHEGHTRGVEQVYLRCAQGFLEWLYPTGAIIVNLRPNTLSPAASLLSVCIKPSKESSGTHIYLDRLGKLRLLLSEGDQAEGKVHCFNIQDGALFIEAVPQRDISRKITAFQYELVNHRPGADPQSLSAPCQPCTDAEVLLAVCTSDFVARGRILGVSEEDEQTSVTVSLSHLYRQKTQVFVSGGGRAKRWTGFVKMSRQCGVKPGDGEFLFTGTVRFGEAWLSCAPRYKDFLRVYQDARQQGTNPCHLETD</sequence>
<name>METRL_DANRE</name>
<dbReference type="EMBL" id="BC046006">
    <property type="protein sequence ID" value="AAH46006.1"/>
    <property type="molecule type" value="mRNA"/>
</dbReference>
<dbReference type="RefSeq" id="NP_998150.1">
    <property type="nucleotide sequence ID" value="NM_212985.1"/>
</dbReference>
<dbReference type="SMR" id="Q7ZV46"/>
<dbReference type="FunCoup" id="Q7ZV46">
    <property type="interactions" value="1537"/>
</dbReference>
<dbReference type="STRING" id="7955.ENSDARP00000131064"/>
<dbReference type="PaxDb" id="7955-ENSDARP00000068919"/>
<dbReference type="GeneID" id="406258"/>
<dbReference type="KEGG" id="dre:406258"/>
<dbReference type="AGR" id="ZFIN:ZDB-GENE-040426-1917"/>
<dbReference type="CTD" id="406258"/>
<dbReference type="ZFIN" id="ZDB-GENE-040426-1917">
    <property type="gene designation" value="metrnla"/>
</dbReference>
<dbReference type="eggNOG" id="ENOG502QUQB">
    <property type="taxonomic scope" value="Eukaryota"/>
</dbReference>
<dbReference type="InParanoid" id="Q7ZV46"/>
<dbReference type="OrthoDB" id="6092325at2759"/>
<dbReference type="PhylomeDB" id="Q7ZV46"/>
<dbReference type="PRO" id="PR:Q7ZV46"/>
<dbReference type="Proteomes" id="UP000000437">
    <property type="component" value="Chromosome 3"/>
</dbReference>
<dbReference type="GO" id="GO:0005615">
    <property type="term" value="C:extracellular space"/>
    <property type="evidence" value="ECO:0000250"/>
    <property type="project" value="UniProtKB"/>
</dbReference>
<dbReference type="GO" id="GO:0005179">
    <property type="term" value="F:hormone activity"/>
    <property type="evidence" value="ECO:0000250"/>
    <property type="project" value="UniProtKB"/>
</dbReference>
<dbReference type="GO" id="GO:0050873">
    <property type="term" value="P:brown fat cell differentiation"/>
    <property type="evidence" value="ECO:0000250"/>
    <property type="project" value="UniProtKB"/>
</dbReference>
<dbReference type="GO" id="GO:0097009">
    <property type="term" value="P:energy homeostasis"/>
    <property type="evidence" value="ECO:0000250"/>
    <property type="project" value="UniProtKB"/>
</dbReference>
<dbReference type="GO" id="GO:0050728">
    <property type="term" value="P:negative regulation of inflammatory response"/>
    <property type="evidence" value="ECO:0000250"/>
    <property type="project" value="UniProtKB"/>
</dbReference>
<dbReference type="GO" id="GO:0090336">
    <property type="term" value="P:positive regulation of brown fat cell differentiation"/>
    <property type="evidence" value="ECO:0000250"/>
    <property type="project" value="UniProtKB"/>
</dbReference>
<dbReference type="GO" id="GO:0009409">
    <property type="term" value="P:response to cold"/>
    <property type="evidence" value="ECO:0000250"/>
    <property type="project" value="UniProtKB"/>
</dbReference>
<dbReference type="GO" id="GO:0014850">
    <property type="term" value="P:response to muscle activity"/>
    <property type="evidence" value="ECO:0000250"/>
    <property type="project" value="UniProtKB"/>
</dbReference>
<dbReference type="Gene3D" id="2.40.50.120">
    <property type="match status" value="1"/>
</dbReference>
<dbReference type="InterPro" id="IPR051998">
    <property type="entry name" value="Meteorin-like"/>
</dbReference>
<dbReference type="InterPro" id="IPR008993">
    <property type="entry name" value="TIMP-like_OB-fold"/>
</dbReference>
<dbReference type="PANTHER" id="PTHR28593">
    <property type="entry name" value="METEORIN-LIKE PROTEIN"/>
    <property type="match status" value="1"/>
</dbReference>
<dbReference type="PANTHER" id="PTHR28593:SF1">
    <property type="entry name" value="METEORIN-LIKE PROTEIN"/>
    <property type="match status" value="1"/>
</dbReference>
<dbReference type="SUPFAM" id="SSF50242">
    <property type="entry name" value="TIMP-like"/>
    <property type="match status" value="1"/>
</dbReference>